<comment type="catalytic activity">
    <reaction evidence="1">
        <text>beta-D-fructose 1,6-bisphosphate + H2O = beta-D-fructose 6-phosphate + phosphate</text>
        <dbReference type="Rhea" id="RHEA:11064"/>
        <dbReference type="ChEBI" id="CHEBI:15377"/>
        <dbReference type="ChEBI" id="CHEBI:32966"/>
        <dbReference type="ChEBI" id="CHEBI:43474"/>
        <dbReference type="ChEBI" id="CHEBI:57634"/>
        <dbReference type="EC" id="3.1.3.11"/>
    </reaction>
</comment>
<comment type="cofactor">
    <cofactor evidence="1">
        <name>Mg(2+)</name>
        <dbReference type="ChEBI" id="CHEBI:18420"/>
    </cofactor>
    <text evidence="1">Binds 2 magnesium ions per subunit.</text>
</comment>
<comment type="pathway">
    <text evidence="1">Carbohydrate biosynthesis; gluconeogenesis.</text>
</comment>
<comment type="subunit">
    <text evidence="1">Homotetramer.</text>
</comment>
<comment type="subcellular location">
    <subcellularLocation>
        <location evidence="1">Cytoplasm</location>
    </subcellularLocation>
</comment>
<comment type="similarity">
    <text evidence="1">Belongs to the FBPase class 1 family.</text>
</comment>
<proteinExistence type="inferred from homology"/>
<protein>
    <recommendedName>
        <fullName evidence="1">Fructose-1,6-bisphosphatase class 1</fullName>
        <shortName evidence="1">FBPase class 1</shortName>
        <ecNumber evidence="1">3.1.3.11</ecNumber>
    </recommendedName>
    <alternativeName>
        <fullName evidence="1">D-fructose-1,6-bisphosphate 1-phosphohydrolase class 1</fullName>
    </alternativeName>
</protein>
<organism>
    <name type="scientific">Idiomarina loihiensis (strain ATCC BAA-735 / DSM 15497 / L2-TR)</name>
    <dbReference type="NCBI Taxonomy" id="283942"/>
    <lineage>
        <taxon>Bacteria</taxon>
        <taxon>Pseudomonadati</taxon>
        <taxon>Pseudomonadota</taxon>
        <taxon>Gammaproteobacteria</taxon>
        <taxon>Alteromonadales</taxon>
        <taxon>Idiomarinaceae</taxon>
        <taxon>Idiomarina</taxon>
    </lineage>
</organism>
<gene>
    <name evidence="1" type="primary">fbp</name>
    <name type="ordered locus">IL2262</name>
</gene>
<reference key="1">
    <citation type="journal article" date="2004" name="Proc. Natl. Acad. Sci. U.S.A.">
        <title>Genome sequence of the deep-sea gamma-proteobacterium Idiomarina loihiensis reveals amino acid fermentation as a source of carbon and energy.</title>
        <authorList>
            <person name="Hou S."/>
            <person name="Saw J.H."/>
            <person name="Lee K.S."/>
            <person name="Freitas T.A."/>
            <person name="Belisle C."/>
            <person name="Kawarabayasi Y."/>
            <person name="Donachie S.P."/>
            <person name="Pikina A."/>
            <person name="Galperin M.Y."/>
            <person name="Koonin E.V."/>
            <person name="Makarova K.S."/>
            <person name="Omelchenko M.V."/>
            <person name="Sorokin A."/>
            <person name="Wolf Y.I."/>
            <person name="Li Q.X."/>
            <person name="Keum Y.S."/>
            <person name="Campbell S."/>
            <person name="Denery J."/>
            <person name="Aizawa S."/>
            <person name="Shibata S."/>
            <person name="Malahoff A."/>
            <person name="Alam M."/>
        </authorList>
    </citation>
    <scope>NUCLEOTIDE SEQUENCE [LARGE SCALE GENOMIC DNA]</scope>
    <source>
        <strain>ATCC BAA-735 / DSM 15497 / L2-TR</strain>
    </source>
</reference>
<keyword id="KW-0119">Carbohydrate metabolism</keyword>
<keyword id="KW-0963">Cytoplasm</keyword>
<keyword id="KW-0378">Hydrolase</keyword>
<keyword id="KW-0460">Magnesium</keyword>
<keyword id="KW-0479">Metal-binding</keyword>
<keyword id="KW-1185">Reference proteome</keyword>
<name>F16PA_IDILO</name>
<dbReference type="EC" id="3.1.3.11" evidence="1"/>
<dbReference type="EMBL" id="AE017340">
    <property type="protein sequence ID" value="AAV83094.1"/>
    <property type="molecule type" value="Genomic_DNA"/>
</dbReference>
<dbReference type="RefSeq" id="WP_011235489.1">
    <property type="nucleotide sequence ID" value="NC_006512.1"/>
</dbReference>
<dbReference type="SMR" id="Q5QVR9"/>
<dbReference type="STRING" id="283942.IL2262"/>
<dbReference type="GeneID" id="41337451"/>
<dbReference type="KEGG" id="ilo:IL2262"/>
<dbReference type="eggNOG" id="COG0158">
    <property type="taxonomic scope" value="Bacteria"/>
</dbReference>
<dbReference type="HOGENOM" id="CLU_039977_0_0_6"/>
<dbReference type="OrthoDB" id="9806756at2"/>
<dbReference type="UniPathway" id="UPA00138"/>
<dbReference type="Proteomes" id="UP000001171">
    <property type="component" value="Chromosome"/>
</dbReference>
<dbReference type="GO" id="GO:0005829">
    <property type="term" value="C:cytosol"/>
    <property type="evidence" value="ECO:0007669"/>
    <property type="project" value="TreeGrafter"/>
</dbReference>
<dbReference type="GO" id="GO:0042132">
    <property type="term" value="F:fructose 1,6-bisphosphate 1-phosphatase activity"/>
    <property type="evidence" value="ECO:0007669"/>
    <property type="project" value="UniProtKB-UniRule"/>
</dbReference>
<dbReference type="GO" id="GO:0000287">
    <property type="term" value="F:magnesium ion binding"/>
    <property type="evidence" value="ECO:0007669"/>
    <property type="project" value="UniProtKB-UniRule"/>
</dbReference>
<dbReference type="GO" id="GO:0030388">
    <property type="term" value="P:fructose 1,6-bisphosphate metabolic process"/>
    <property type="evidence" value="ECO:0007669"/>
    <property type="project" value="TreeGrafter"/>
</dbReference>
<dbReference type="GO" id="GO:0006002">
    <property type="term" value="P:fructose 6-phosphate metabolic process"/>
    <property type="evidence" value="ECO:0007669"/>
    <property type="project" value="TreeGrafter"/>
</dbReference>
<dbReference type="GO" id="GO:0006000">
    <property type="term" value="P:fructose metabolic process"/>
    <property type="evidence" value="ECO:0007669"/>
    <property type="project" value="TreeGrafter"/>
</dbReference>
<dbReference type="GO" id="GO:0006094">
    <property type="term" value="P:gluconeogenesis"/>
    <property type="evidence" value="ECO:0007669"/>
    <property type="project" value="UniProtKB-UniRule"/>
</dbReference>
<dbReference type="GO" id="GO:0005986">
    <property type="term" value="P:sucrose biosynthetic process"/>
    <property type="evidence" value="ECO:0007669"/>
    <property type="project" value="TreeGrafter"/>
</dbReference>
<dbReference type="CDD" id="cd00354">
    <property type="entry name" value="FBPase"/>
    <property type="match status" value="1"/>
</dbReference>
<dbReference type="FunFam" id="3.30.540.10:FF:000002">
    <property type="entry name" value="Fructose-1,6-bisphosphatase class 1"/>
    <property type="match status" value="1"/>
</dbReference>
<dbReference type="FunFam" id="3.40.190.80:FF:000011">
    <property type="entry name" value="Fructose-1,6-bisphosphatase class 1"/>
    <property type="match status" value="1"/>
</dbReference>
<dbReference type="Gene3D" id="3.40.190.80">
    <property type="match status" value="1"/>
</dbReference>
<dbReference type="Gene3D" id="3.30.540.10">
    <property type="entry name" value="Fructose-1,6-Bisphosphatase, subunit A, domain 1"/>
    <property type="match status" value="1"/>
</dbReference>
<dbReference type="HAMAP" id="MF_01855">
    <property type="entry name" value="FBPase_class1"/>
    <property type="match status" value="1"/>
</dbReference>
<dbReference type="InterPro" id="IPR044015">
    <property type="entry name" value="FBPase_C_dom"/>
</dbReference>
<dbReference type="InterPro" id="IPR000146">
    <property type="entry name" value="FBPase_class-1"/>
</dbReference>
<dbReference type="InterPro" id="IPR033391">
    <property type="entry name" value="FBPase_N"/>
</dbReference>
<dbReference type="InterPro" id="IPR028343">
    <property type="entry name" value="FBPtase"/>
</dbReference>
<dbReference type="NCBIfam" id="NF006779">
    <property type="entry name" value="PRK09293.1-3"/>
    <property type="match status" value="1"/>
</dbReference>
<dbReference type="NCBIfam" id="NF006780">
    <property type="entry name" value="PRK09293.1-4"/>
    <property type="match status" value="1"/>
</dbReference>
<dbReference type="PANTHER" id="PTHR11556">
    <property type="entry name" value="FRUCTOSE-1,6-BISPHOSPHATASE-RELATED"/>
    <property type="match status" value="1"/>
</dbReference>
<dbReference type="PANTHER" id="PTHR11556:SF35">
    <property type="entry name" value="SEDOHEPTULOSE-1,7-BISPHOSPHATASE, CHLOROPLASTIC"/>
    <property type="match status" value="1"/>
</dbReference>
<dbReference type="Pfam" id="PF00316">
    <property type="entry name" value="FBPase"/>
    <property type="match status" value="1"/>
</dbReference>
<dbReference type="Pfam" id="PF18913">
    <property type="entry name" value="FBPase_C"/>
    <property type="match status" value="1"/>
</dbReference>
<dbReference type="PIRSF" id="PIRSF500210">
    <property type="entry name" value="FBPtase"/>
    <property type="match status" value="1"/>
</dbReference>
<dbReference type="PIRSF" id="PIRSF000904">
    <property type="entry name" value="FBPtase_SBPase"/>
    <property type="match status" value="1"/>
</dbReference>
<dbReference type="PRINTS" id="PR00115">
    <property type="entry name" value="F16BPHPHTASE"/>
</dbReference>
<dbReference type="SUPFAM" id="SSF56655">
    <property type="entry name" value="Carbohydrate phosphatase"/>
    <property type="match status" value="1"/>
</dbReference>
<accession>Q5QVR9</accession>
<evidence type="ECO:0000255" key="1">
    <source>
        <dbReference type="HAMAP-Rule" id="MF_01855"/>
    </source>
</evidence>
<sequence length="327" mass="36245">MKRLLPTLRADQTSESLISVINTIQIAAKEISFRLHQGALAGVLGSTLDENIQGETQKKLDVVANQLLKTLLLESPNVHAVASEEEDSIVESPNSGHYLVAFDPLDGSSNIDINGGVGTIFSILRKPEGEETSENMFLQPGKAQVAAGYVLYGPATMLVMTTGKAVRIYTLDQTVGEFLLTHEKAEIPKDTKEFAINMSNRRHWADPIRAYISDLLEGEEGPRGKNFNMRWNAAMVSDVHRVISRGGLFTYPWDARKPEKPFKLRLLYEAAPMAMLVEKAGGKATDGYSRLMEIVPEHIHQRVSVVMGSANEVDVCMDYHKQHPKPY</sequence>
<feature type="chain" id="PRO_0000364579" description="Fructose-1,6-bisphosphatase class 1">
    <location>
        <begin position="1"/>
        <end position="327"/>
    </location>
</feature>
<feature type="binding site" evidence="1">
    <location>
        <position position="84"/>
    </location>
    <ligand>
        <name>Mg(2+)</name>
        <dbReference type="ChEBI" id="CHEBI:18420"/>
        <label>1</label>
    </ligand>
</feature>
<feature type="binding site" evidence="1">
    <location>
        <position position="103"/>
    </location>
    <ligand>
        <name>Mg(2+)</name>
        <dbReference type="ChEBI" id="CHEBI:18420"/>
        <label>1</label>
    </ligand>
</feature>
<feature type="binding site" evidence="1">
    <location>
        <position position="103"/>
    </location>
    <ligand>
        <name>Mg(2+)</name>
        <dbReference type="ChEBI" id="CHEBI:18420"/>
        <label>2</label>
    </ligand>
</feature>
<feature type="binding site" evidence="1">
    <location>
        <position position="105"/>
    </location>
    <ligand>
        <name>Mg(2+)</name>
        <dbReference type="ChEBI" id="CHEBI:18420"/>
        <label>1</label>
    </ligand>
</feature>
<feature type="binding site" evidence="1">
    <location>
        <begin position="106"/>
        <end position="109"/>
    </location>
    <ligand>
        <name>substrate</name>
    </ligand>
</feature>
<feature type="binding site" evidence="1">
    <location>
        <position position="106"/>
    </location>
    <ligand>
        <name>Mg(2+)</name>
        <dbReference type="ChEBI" id="CHEBI:18420"/>
        <label>2</label>
    </ligand>
</feature>
<feature type="binding site" evidence="1">
    <location>
        <position position="197"/>
    </location>
    <ligand>
        <name>substrate</name>
    </ligand>
</feature>
<feature type="binding site" evidence="1">
    <location>
        <position position="263"/>
    </location>
    <ligand>
        <name>substrate</name>
    </ligand>
</feature>
<feature type="binding site" evidence="1">
    <location>
        <position position="269"/>
    </location>
    <ligand>
        <name>Mg(2+)</name>
        <dbReference type="ChEBI" id="CHEBI:18420"/>
        <label>2</label>
    </ligand>
</feature>